<sequence length="84" mass="9539">MANIKANEKSYRQNQKANLLTKGFKTSLKNQLKKTKASKDKKDVEQVYSLADKLAKNNRISKNKARRLKSRAARWSNSATAASR</sequence>
<keyword id="KW-1185">Reference proteome</keyword>
<keyword id="KW-0687">Ribonucleoprotein</keyword>
<keyword id="KW-0689">Ribosomal protein</keyword>
<keyword id="KW-0694">RNA-binding</keyword>
<keyword id="KW-0699">rRNA-binding</keyword>
<accession>Q7NBY3</accession>
<reference key="1">
    <citation type="journal article" date="2003" name="Microbiology">
        <title>The complete genome sequence of the avian pathogen Mycoplasma gallisepticum strain R(low).</title>
        <authorList>
            <person name="Papazisi L."/>
            <person name="Gorton T.S."/>
            <person name="Kutish G."/>
            <person name="Markham P.F."/>
            <person name="Browning G.F."/>
            <person name="Nguyen D.K."/>
            <person name="Swartzell S."/>
            <person name="Madan A."/>
            <person name="Mahairas G."/>
            <person name="Geary S.J."/>
        </authorList>
    </citation>
    <scope>NUCLEOTIDE SEQUENCE [LARGE SCALE GENOMIC DNA]</scope>
    <source>
        <strain>R(low / passage 15 / clone 2)</strain>
    </source>
</reference>
<name>RS20_MYCGA</name>
<organism>
    <name type="scientific">Mycoplasmoides gallisepticum (strain R(low / passage 15 / clone 2))</name>
    <name type="common">Mycoplasma gallisepticum</name>
    <dbReference type="NCBI Taxonomy" id="710127"/>
    <lineage>
        <taxon>Bacteria</taxon>
        <taxon>Bacillati</taxon>
        <taxon>Mycoplasmatota</taxon>
        <taxon>Mycoplasmoidales</taxon>
        <taxon>Mycoplasmoidaceae</taxon>
        <taxon>Mycoplasmoides</taxon>
    </lineage>
</organism>
<proteinExistence type="inferred from homology"/>
<protein>
    <recommendedName>
        <fullName evidence="1">Small ribosomal subunit protein bS20</fullName>
    </recommendedName>
    <alternativeName>
        <fullName evidence="3">30S ribosomal protein S20</fullName>
    </alternativeName>
</protein>
<dbReference type="EMBL" id="AE015450">
    <property type="protein sequence ID" value="AAP56477.2"/>
    <property type="molecule type" value="Genomic_DNA"/>
</dbReference>
<dbReference type="RefSeq" id="WP_011113356.1">
    <property type="nucleotide sequence ID" value="NC_004829.2"/>
</dbReference>
<dbReference type="SMR" id="Q7NBY3"/>
<dbReference type="GeneID" id="93509942"/>
<dbReference type="KEGG" id="mga:MGA_0844"/>
<dbReference type="PATRIC" id="fig|233150.7.peg.141"/>
<dbReference type="HOGENOM" id="CLU_160655_3_2_14"/>
<dbReference type="OrthoDB" id="9808392at2"/>
<dbReference type="Proteomes" id="UP000001418">
    <property type="component" value="Chromosome"/>
</dbReference>
<dbReference type="GO" id="GO:1990904">
    <property type="term" value="C:ribonucleoprotein complex"/>
    <property type="evidence" value="ECO:0007669"/>
    <property type="project" value="UniProtKB-KW"/>
</dbReference>
<dbReference type="GO" id="GO:0005840">
    <property type="term" value="C:ribosome"/>
    <property type="evidence" value="ECO:0007669"/>
    <property type="project" value="UniProtKB-KW"/>
</dbReference>
<dbReference type="GO" id="GO:0019843">
    <property type="term" value="F:rRNA binding"/>
    <property type="evidence" value="ECO:0007669"/>
    <property type="project" value="UniProtKB-UniRule"/>
</dbReference>
<dbReference type="GO" id="GO:0003735">
    <property type="term" value="F:structural constituent of ribosome"/>
    <property type="evidence" value="ECO:0007669"/>
    <property type="project" value="InterPro"/>
</dbReference>
<dbReference type="GO" id="GO:0006412">
    <property type="term" value="P:translation"/>
    <property type="evidence" value="ECO:0007669"/>
    <property type="project" value="UniProtKB-UniRule"/>
</dbReference>
<dbReference type="Gene3D" id="1.20.58.110">
    <property type="entry name" value="Ribosomal protein S20"/>
    <property type="match status" value="1"/>
</dbReference>
<dbReference type="HAMAP" id="MF_00500">
    <property type="entry name" value="Ribosomal_bS20"/>
    <property type="match status" value="1"/>
</dbReference>
<dbReference type="InterPro" id="IPR002583">
    <property type="entry name" value="Ribosomal_bS20"/>
</dbReference>
<dbReference type="InterPro" id="IPR036510">
    <property type="entry name" value="Ribosomal_bS20_sf"/>
</dbReference>
<dbReference type="NCBIfam" id="TIGR00029">
    <property type="entry name" value="S20"/>
    <property type="match status" value="1"/>
</dbReference>
<dbReference type="Pfam" id="PF01649">
    <property type="entry name" value="Ribosomal_S20p"/>
    <property type="match status" value="1"/>
</dbReference>
<dbReference type="SUPFAM" id="SSF46992">
    <property type="entry name" value="Ribosomal protein S20"/>
    <property type="match status" value="1"/>
</dbReference>
<evidence type="ECO:0000255" key="1">
    <source>
        <dbReference type="HAMAP-Rule" id="MF_00500"/>
    </source>
</evidence>
<evidence type="ECO:0000256" key="2">
    <source>
        <dbReference type="SAM" id="MobiDB-lite"/>
    </source>
</evidence>
<evidence type="ECO:0000305" key="3"/>
<comment type="function">
    <text evidence="1">Binds directly to 16S ribosomal RNA.</text>
</comment>
<comment type="similarity">
    <text evidence="1">Belongs to the bacterial ribosomal protein bS20 family.</text>
</comment>
<feature type="chain" id="PRO_0000260126" description="Small ribosomal subunit protein bS20">
    <location>
        <begin position="1"/>
        <end position="84"/>
    </location>
</feature>
<feature type="region of interest" description="Disordered" evidence="2">
    <location>
        <begin position="62"/>
        <end position="84"/>
    </location>
</feature>
<feature type="compositionally biased region" description="Basic residues" evidence="2">
    <location>
        <begin position="62"/>
        <end position="72"/>
    </location>
</feature>
<feature type="compositionally biased region" description="Polar residues" evidence="2">
    <location>
        <begin position="75"/>
        <end position="84"/>
    </location>
</feature>
<gene>
    <name evidence="1" type="primary">rpsT</name>
    <name type="ordered locus">MYCGA1270</name>
    <name type="ORF">MGA_0844</name>
</gene>